<proteinExistence type="evidence at protein level"/>
<evidence type="ECO:0000250" key="1">
    <source>
        <dbReference type="UniProtKB" id="Q810M1"/>
    </source>
</evidence>
<evidence type="ECO:0000269" key="2">
    <source>
    </source>
</evidence>
<evidence type="ECO:0000269" key="3">
    <source ref="1"/>
</evidence>
<evidence type="ECO:0000269" key="4">
    <source ref="4"/>
</evidence>
<evidence type="ECO:0000303" key="5">
    <source>
    </source>
</evidence>
<evidence type="ECO:0000303" key="6">
    <source ref="1"/>
</evidence>
<evidence type="ECO:0000305" key="7"/>
<evidence type="ECO:0000312" key="8">
    <source>
        <dbReference type="HGNC" id="HGNC:28554"/>
    </source>
</evidence>
<dbReference type="EMBL" id="AY349359">
    <property type="protein sequence ID" value="AAQ56723.1"/>
    <property type="molecule type" value="mRNA"/>
</dbReference>
<dbReference type="EMBL" id="AK128642">
    <property type="protein sequence ID" value="BAC87545.1"/>
    <property type="molecule type" value="mRNA"/>
</dbReference>
<dbReference type="EMBL" id="AC021127">
    <property type="status" value="NOT_ANNOTATED_CDS"/>
    <property type="molecule type" value="Genomic_DNA"/>
</dbReference>
<dbReference type="EMBL" id="AC093876">
    <property type="status" value="NOT_ANNOTATED_CDS"/>
    <property type="molecule type" value="Genomic_DNA"/>
</dbReference>
<dbReference type="EMBL" id="AC093883">
    <property type="status" value="NOT_ANNOTATED_CDS"/>
    <property type="molecule type" value="Genomic_DNA"/>
</dbReference>
<dbReference type="EMBL" id="AC098822">
    <property type="status" value="NOT_ANNOTATED_CDS"/>
    <property type="molecule type" value="Genomic_DNA"/>
</dbReference>
<dbReference type="EMBL" id="AC105917">
    <property type="status" value="NOT_ANNOTATED_CDS"/>
    <property type="molecule type" value="Genomic_DNA"/>
</dbReference>
<dbReference type="EMBL" id="CH471057">
    <property type="protein sequence ID" value="EAX05864.1"/>
    <property type="molecule type" value="Genomic_DNA"/>
</dbReference>
<dbReference type="EMBL" id="BC034296">
    <property type="protein sequence ID" value="AAH34296.1"/>
    <property type="molecule type" value="mRNA"/>
</dbReference>
<dbReference type="CCDS" id="CCDS3587.1">
    <molecule id="Q6V702-2"/>
</dbReference>
<dbReference type="CCDS" id="CCDS56336.1">
    <molecule id="Q6V702-1"/>
</dbReference>
<dbReference type="RefSeq" id="NP_001193926.1">
    <molecule id="Q6V702-1"/>
    <property type="nucleotide sequence ID" value="NM_001206997.2"/>
</dbReference>
<dbReference type="RefSeq" id="NP_689983.2">
    <molecule id="Q6V702-2"/>
    <property type="nucleotide sequence ID" value="NM_152770.3"/>
</dbReference>
<dbReference type="PDB" id="8J07">
    <property type="method" value="EM"/>
    <property type="resolution" value="4.10 A"/>
    <property type="chains" value="i3=1-233"/>
</dbReference>
<dbReference type="PDB" id="9FGP">
    <property type="method" value="X-ray"/>
    <property type="resolution" value="1.49 A"/>
    <property type="chains" value="A/B=92-229"/>
</dbReference>
<dbReference type="PDBsum" id="8J07"/>
<dbReference type="PDBsum" id="9FGP"/>
<dbReference type="EMDB" id="EMD-35888"/>
<dbReference type="SMR" id="Q6V702"/>
<dbReference type="BioGRID" id="129077">
    <property type="interactions" value="11"/>
</dbReference>
<dbReference type="FunCoup" id="Q6V702">
    <property type="interactions" value="476"/>
</dbReference>
<dbReference type="IntAct" id="Q6V702">
    <property type="interactions" value="4"/>
</dbReference>
<dbReference type="STRING" id="9606.ENSP00000425786"/>
<dbReference type="iPTMnet" id="Q6V702"/>
<dbReference type="PhosphoSitePlus" id="Q6V702"/>
<dbReference type="BioMuta" id="C4orf22"/>
<dbReference type="DMDM" id="296439464"/>
<dbReference type="jPOST" id="Q6V702"/>
<dbReference type="MassIVE" id="Q6V702"/>
<dbReference type="PaxDb" id="9606-ENSP00000425786"/>
<dbReference type="PeptideAtlas" id="Q6V702"/>
<dbReference type="ProteomicsDB" id="17485"/>
<dbReference type="ProteomicsDB" id="67716">
    <molecule id="Q6V702-2"/>
</dbReference>
<dbReference type="ProteomicsDB" id="67717">
    <molecule id="Q6V702-1"/>
</dbReference>
<dbReference type="ProteomicsDB" id="67718">
    <molecule id="Q6V702-3"/>
</dbReference>
<dbReference type="Antibodypedia" id="51658">
    <property type="antibodies" value="105 antibodies from 15 providers"/>
</dbReference>
<dbReference type="DNASU" id="255119"/>
<dbReference type="Ensembl" id="ENST00000358105.8">
    <molecule id="Q6V702-2"/>
    <property type="protein sequence ID" value="ENSP00000350818.3"/>
    <property type="gene ID" value="ENSG00000197826.13"/>
</dbReference>
<dbReference type="Ensembl" id="ENST00000508675.1">
    <molecule id="Q6V702-1"/>
    <property type="protein sequence ID" value="ENSP00000425786.1"/>
    <property type="gene ID" value="ENSG00000197826.13"/>
</dbReference>
<dbReference type="GeneID" id="255119"/>
<dbReference type="KEGG" id="hsa:255119"/>
<dbReference type="MANE-Select" id="ENST00000358105.8">
    <property type="protein sequence ID" value="ENSP00000350818.3"/>
    <property type="RefSeq nucleotide sequence ID" value="NM_152770.3"/>
    <property type="RefSeq protein sequence ID" value="NP_689983.2"/>
</dbReference>
<dbReference type="UCSC" id="uc003hmf.3">
    <molecule id="Q6V702-2"/>
    <property type="organism name" value="human"/>
</dbReference>
<dbReference type="AGR" id="HGNC:28554"/>
<dbReference type="CTD" id="255119"/>
<dbReference type="DisGeNET" id="255119"/>
<dbReference type="GeneCards" id="CFAP299"/>
<dbReference type="HGNC" id="HGNC:28554">
    <property type="gene designation" value="CFAP299"/>
</dbReference>
<dbReference type="HPA" id="ENSG00000197826">
    <property type="expression patterns" value="Group enriched (fallopian tube, testis)"/>
</dbReference>
<dbReference type="neXtProt" id="NX_Q6V702"/>
<dbReference type="OpenTargets" id="ENSG00000197826"/>
<dbReference type="PharmGKB" id="PA145008853"/>
<dbReference type="VEuPathDB" id="HostDB:ENSG00000197826"/>
<dbReference type="eggNOG" id="ENOG502QSP8">
    <property type="taxonomic scope" value="Eukaryota"/>
</dbReference>
<dbReference type="GeneTree" id="ENSGT00390000016547"/>
<dbReference type="HOGENOM" id="CLU_070912_0_0_1"/>
<dbReference type="InParanoid" id="Q6V702"/>
<dbReference type="OMA" id="FNNYQEY"/>
<dbReference type="OrthoDB" id="2136125at2759"/>
<dbReference type="PAN-GO" id="Q6V702">
    <property type="GO annotations" value="0 GO annotations based on evolutionary models"/>
</dbReference>
<dbReference type="PhylomeDB" id="Q6V702"/>
<dbReference type="TreeFam" id="TF323286"/>
<dbReference type="PathwayCommons" id="Q6V702"/>
<dbReference type="SignaLink" id="Q6V702"/>
<dbReference type="BioGRID-ORCS" id="255119">
    <property type="hits" value="9 hits in 1111 CRISPR screens"/>
</dbReference>
<dbReference type="ChiTaRS" id="C4orf22">
    <property type="organism name" value="human"/>
</dbReference>
<dbReference type="GenomeRNAi" id="255119"/>
<dbReference type="Pharos" id="Q6V702">
    <property type="development level" value="Tdark"/>
</dbReference>
<dbReference type="PRO" id="PR:Q6V702"/>
<dbReference type="Proteomes" id="UP000005640">
    <property type="component" value="Chromosome 4"/>
</dbReference>
<dbReference type="RNAct" id="Q6V702">
    <property type="molecule type" value="protein"/>
</dbReference>
<dbReference type="Bgee" id="ENSG00000197826">
    <property type="expression patterns" value="Expressed in bronchial epithelial cell and 123 other cell types or tissues"/>
</dbReference>
<dbReference type="ExpressionAtlas" id="Q6V702">
    <property type="expression patterns" value="baseline and differential"/>
</dbReference>
<dbReference type="GO" id="GO:0005737">
    <property type="term" value="C:cytoplasm"/>
    <property type="evidence" value="ECO:0000250"/>
    <property type="project" value="UniProtKB"/>
</dbReference>
<dbReference type="GO" id="GO:0005634">
    <property type="term" value="C:nucleus"/>
    <property type="evidence" value="ECO:0007669"/>
    <property type="project" value="UniProtKB-SubCell"/>
</dbReference>
<dbReference type="InterPro" id="IPR027887">
    <property type="entry name" value="DUF4464"/>
</dbReference>
<dbReference type="PANTHER" id="PTHR33588">
    <property type="entry name" value="CILIA- AND FLAGELLA-ASSOCIATED PROTEIN 299"/>
    <property type="match status" value="1"/>
</dbReference>
<dbReference type="PANTHER" id="PTHR33588:SF1">
    <property type="entry name" value="CILIA- AND FLAGELLA-ASSOCIATED PROTEIN 299"/>
    <property type="match status" value="1"/>
</dbReference>
<dbReference type="Pfam" id="PF14713">
    <property type="entry name" value="DUF4464"/>
    <property type="match status" value="1"/>
</dbReference>
<protein>
    <recommendedName>
        <fullName evidence="7">Cilia- and flagella-associated protein 299</fullName>
    </recommendedName>
</protein>
<gene>
    <name evidence="8" type="primary">CFAP299</name>
    <name evidence="8" type="synonym">C4orf22</name>
</gene>
<feature type="chain" id="PRO_0000301955" description="Cilia- and flagella-associated protein 299">
    <location>
        <begin position="1"/>
        <end position="233"/>
    </location>
</feature>
<feature type="splice variant" id="VSP_037233" description="In isoform 1." evidence="6">
    <original>S</original>
    <variation>SLNQQETDAAHILKKQLA</variation>
    <location>
        <position position="111"/>
    </location>
</feature>
<feature type="splice variant" id="VSP_037234" description="In isoform 3." evidence="5">
    <original>SVIFIRDRNSHGQEISGYIDYAHRLKTEDFEVYFTGKKRLLPRPT</original>
    <variation>AGVQWHHLGSLQPLPPGFKEFSCFSLPSGWDYRHAPPHPVRDLYS</variation>
    <location>
        <begin position="112"/>
        <end position="156"/>
    </location>
</feature>
<feature type="splice variant" id="VSP_037235" description="In isoform 3." evidence="5">
    <location>
        <begin position="157"/>
        <end position="233"/>
    </location>
</feature>
<feature type="sequence variant" id="VAR_034913" description="In dbSNP:rs11947742.">
    <original>T</original>
    <variation>M</variation>
    <location>
        <position position="138"/>
    </location>
</feature>
<feature type="sequence variant" id="VAR_034914" description="In dbSNP:rs1052325." evidence="2 3 4">
    <original>V</original>
    <variation>I</variation>
    <location>
        <position position="220"/>
    </location>
</feature>
<feature type="sequence conflict" description="In Ref. 1; AAQ56723." evidence="7" ref="1">
    <original>A</original>
    <variation>V</variation>
    <location>
        <position position="68"/>
    </location>
</feature>
<feature type="sequence conflict" description="In Ref. 1; AAQ56723." evidence="7" ref="1">
    <original>R</original>
    <variation>G</variation>
    <location>
        <position position="119"/>
    </location>
</feature>
<feature type="sequence conflict" description="In Ref. 1; AAQ56723." evidence="7" ref="1">
    <original>I</original>
    <variation>T</variation>
    <location sequence="Q6V702-1">
        <position position="122"/>
    </location>
</feature>
<sequence>MDQEEGLKALDNIVTQFNAYEDFLDSQITTVDLYYLEDETLARQLVELGYRGTGERVKREDFEARKAAIEIARLAERAQQKTLTSAGKDLQDNFLTALAMREEDNRSGKLSSVIFIRDRNSHGQEISGYIDYAHRLKTEDFEVYFTGKKRLLPRPTDISFYNWDADIAVSNSSPNYQVIADNPEGLLFRYKRDRKILNVDPKAQPGDNSTRITILTELYVQAVIFDHISRRKT</sequence>
<reference key="1">
    <citation type="submission" date="2003-07" db="EMBL/GenBank/DDBJ databases">
        <authorList>
            <person name="Zhou G."/>
            <person name="Yu R."/>
            <person name="Zheng G."/>
            <person name="Li H."/>
            <person name="Shen C."/>
            <person name="Ke R."/>
            <person name="Li M."/>
            <person name="Xiao W."/>
            <person name="Lin L."/>
            <person name="Yang S."/>
        </authorList>
    </citation>
    <scope>NUCLEOTIDE SEQUENCE [LARGE SCALE MRNA] (ISOFORM 1)</scope>
    <scope>VARIANT ILE-220</scope>
</reference>
<reference key="2">
    <citation type="journal article" date="2004" name="Nat. Genet.">
        <title>Complete sequencing and characterization of 21,243 full-length human cDNAs.</title>
        <authorList>
            <person name="Ota T."/>
            <person name="Suzuki Y."/>
            <person name="Nishikawa T."/>
            <person name="Otsuki T."/>
            <person name="Sugiyama T."/>
            <person name="Irie R."/>
            <person name="Wakamatsu A."/>
            <person name="Hayashi K."/>
            <person name="Sato H."/>
            <person name="Nagai K."/>
            <person name="Kimura K."/>
            <person name="Makita H."/>
            <person name="Sekine M."/>
            <person name="Obayashi M."/>
            <person name="Nishi T."/>
            <person name="Shibahara T."/>
            <person name="Tanaka T."/>
            <person name="Ishii S."/>
            <person name="Yamamoto J."/>
            <person name="Saito K."/>
            <person name="Kawai Y."/>
            <person name="Isono Y."/>
            <person name="Nakamura Y."/>
            <person name="Nagahari K."/>
            <person name="Murakami K."/>
            <person name="Yasuda T."/>
            <person name="Iwayanagi T."/>
            <person name="Wagatsuma M."/>
            <person name="Shiratori A."/>
            <person name="Sudo H."/>
            <person name="Hosoiri T."/>
            <person name="Kaku Y."/>
            <person name="Kodaira H."/>
            <person name="Kondo H."/>
            <person name="Sugawara M."/>
            <person name="Takahashi M."/>
            <person name="Kanda K."/>
            <person name="Yokoi T."/>
            <person name="Furuya T."/>
            <person name="Kikkawa E."/>
            <person name="Omura Y."/>
            <person name="Abe K."/>
            <person name="Kamihara K."/>
            <person name="Katsuta N."/>
            <person name="Sato K."/>
            <person name="Tanikawa M."/>
            <person name="Yamazaki M."/>
            <person name="Ninomiya K."/>
            <person name="Ishibashi T."/>
            <person name="Yamashita H."/>
            <person name="Murakawa K."/>
            <person name="Fujimori K."/>
            <person name="Tanai H."/>
            <person name="Kimata M."/>
            <person name="Watanabe M."/>
            <person name="Hiraoka S."/>
            <person name="Chiba Y."/>
            <person name="Ishida S."/>
            <person name="Ono Y."/>
            <person name="Takiguchi S."/>
            <person name="Watanabe S."/>
            <person name="Yosida M."/>
            <person name="Hotuta T."/>
            <person name="Kusano J."/>
            <person name="Kanehori K."/>
            <person name="Takahashi-Fujii A."/>
            <person name="Hara H."/>
            <person name="Tanase T.-O."/>
            <person name="Nomura Y."/>
            <person name="Togiya S."/>
            <person name="Komai F."/>
            <person name="Hara R."/>
            <person name="Takeuchi K."/>
            <person name="Arita M."/>
            <person name="Imose N."/>
            <person name="Musashino K."/>
            <person name="Yuuki H."/>
            <person name="Oshima A."/>
            <person name="Sasaki N."/>
            <person name="Aotsuka S."/>
            <person name="Yoshikawa Y."/>
            <person name="Matsunawa H."/>
            <person name="Ichihara T."/>
            <person name="Shiohata N."/>
            <person name="Sano S."/>
            <person name="Moriya S."/>
            <person name="Momiyama H."/>
            <person name="Satoh N."/>
            <person name="Takami S."/>
            <person name="Terashima Y."/>
            <person name="Suzuki O."/>
            <person name="Nakagawa S."/>
            <person name="Senoh A."/>
            <person name="Mizoguchi H."/>
            <person name="Goto Y."/>
            <person name="Shimizu F."/>
            <person name="Wakebe H."/>
            <person name="Hishigaki H."/>
            <person name="Watanabe T."/>
            <person name="Sugiyama A."/>
            <person name="Takemoto M."/>
            <person name="Kawakami B."/>
            <person name="Yamazaki M."/>
            <person name="Watanabe K."/>
            <person name="Kumagai A."/>
            <person name="Itakura S."/>
            <person name="Fukuzumi Y."/>
            <person name="Fujimori Y."/>
            <person name="Komiyama M."/>
            <person name="Tashiro H."/>
            <person name="Tanigami A."/>
            <person name="Fujiwara T."/>
            <person name="Ono T."/>
            <person name="Yamada K."/>
            <person name="Fujii Y."/>
            <person name="Ozaki K."/>
            <person name="Hirao M."/>
            <person name="Ohmori Y."/>
            <person name="Kawabata A."/>
            <person name="Hikiji T."/>
            <person name="Kobatake N."/>
            <person name="Inagaki H."/>
            <person name="Ikema Y."/>
            <person name="Okamoto S."/>
            <person name="Okitani R."/>
            <person name="Kawakami T."/>
            <person name="Noguchi S."/>
            <person name="Itoh T."/>
            <person name="Shigeta K."/>
            <person name="Senba T."/>
            <person name="Matsumura K."/>
            <person name="Nakajima Y."/>
            <person name="Mizuno T."/>
            <person name="Morinaga M."/>
            <person name="Sasaki M."/>
            <person name="Togashi T."/>
            <person name="Oyama M."/>
            <person name="Hata H."/>
            <person name="Watanabe M."/>
            <person name="Komatsu T."/>
            <person name="Mizushima-Sugano J."/>
            <person name="Satoh T."/>
            <person name="Shirai Y."/>
            <person name="Takahashi Y."/>
            <person name="Nakagawa K."/>
            <person name="Okumura K."/>
            <person name="Nagase T."/>
            <person name="Nomura N."/>
            <person name="Kikuchi H."/>
            <person name="Masuho Y."/>
            <person name="Yamashita R."/>
            <person name="Nakai K."/>
            <person name="Yada T."/>
            <person name="Nakamura Y."/>
            <person name="Ohara O."/>
            <person name="Isogai T."/>
            <person name="Sugano S."/>
        </authorList>
    </citation>
    <scope>NUCLEOTIDE SEQUENCE [LARGE SCALE MRNA] (ISOFORM 3)</scope>
    <source>
        <tissue>Trachea</tissue>
    </source>
</reference>
<reference key="3">
    <citation type="journal article" date="2005" name="Nature">
        <title>Generation and annotation of the DNA sequences of human chromosomes 2 and 4.</title>
        <authorList>
            <person name="Hillier L.W."/>
            <person name="Graves T.A."/>
            <person name="Fulton R.S."/>
            <person name="Fulton L.A."/>
            <person name="Pepin K.H."/>
            <person name="Minx P."/>
            <person name="Wagner-McPherson C."/>
            <person name="Layman D."/>
            <person name="Wylie K."/>
            <person name="Sekhon M."/>
            <person name="Becker M.C."/>
            <person name="Fewell G.A."/>
            <person name="Delehaunty K.D."/>
            <person name="Miner T.L."/>
            <person name="Nash W.E."/>
            <person name="Kremitzki C."/>
            <person name="Oddy L."/>
            <person name="Du H."/>
            <person name="Sun H."/>
            <person name="Bradshaw-Cordum H."/>
            <person name="Ali J."/>
            <person name="Carter J."/>
            <person name="Cordes M."/>
            <person name="Harris A."/>
            <person name="Isak A."/>
            <person name="van Brunt A."/>
            <person name="Nguyen C."/>
            <person name="Du F."/>
            <person name="Courtney L."/>
            <person name="Kalicki J."/>
            <person name="Ozersky P."/>
            <person name="Abbott S."/>
            <person name="Armstrong J."/>
            <person name="Belter E.A."/>
            <person name="Caruso L."/>
            <person name="Cedroni M."/>
            <person name="Cotton M."/>
            <person name="Davidson T."/>
            <person name="Desai A."/>
            <person name="Elliott G."/>
            <person name="Erb T."/>
            <person name="Fronick C."/>
            <person name="Gaige T."/>
            <person name="Haakenson W."/>
            <person name="Haglund K."/>
            <person name="Holmes A."/>
            <person name="Harkins R."/>
            <person name="Kim K."/>
            <person name="Kruchowski S.S."/>
            <person name="Strong C.M."/>
            <person name="Grewal N."/>
            <person name="Goyea E."/>
            <person name="Hou S."/>
            <person name="Levy A."/>
            <person name="Martinka S."/>
            <person name="Mead K."/>
            <person name="McLellan M.D."/>
            <person name="Meyer R."/>
            <person name="Randall-Maher J."/>
            <person name="Tomlinson C."/>
            <person name="Dauphin-Kohlberg S."/>
            <person name="Kozlowicz-Reilly A."/>
            <person name="Shah N."/>
            <person name="Swearengen-Shahid S."/>
            <person name="Snider J."/>
            <person name="Strong J.T."/>
            <person name="Thompson J."/>
            <person name="Yoakum M."/>
            <person name="Leonard S."/>
            <person name="Pearman C."/>
            <person name="Trani L."/>
            <person name="Radionenko M."/>
            <person name="Waligorski J.E."/>
            <person name="Wang C."/>
            <person name="Rock S.M."/>
            <person name="Tin-Wollam A.-M."/>
            <person name="Maupin R."/>
            <person name="Latreille P."/>
            <person name="Wendl M.C."/>
            <person name="Yang S.-P."/>
            <person name="Pohl C."/>
            <person name="Wallis J.W."/>
            <person name="Spieth J."/>
            <person name="Bieri T.A."/>
            <person name="Berkowicz N."/>
            <person name="Nelson J.O."/>
            <person name="Osborne J."/>
            <person name="Ding L."/>
            <person name="Meyer R."/>
            <person name="Sabo A."/>
            <person name="Shotland Y."/>
            <person name="Sinha P."/>
            <person name="Wohldmann P.E."/>
            <person name="Cook L.L."/>
            <person name="Hickenbotham M.T."/>
            <person name="Eldred J."/>
            <person name="Williams D."/>
            <person name="Jones T.A."/>
            <person name="She X."/>
            <person name="Ciccarelli F.D."/>
            <person name="Izaurralde E."/>
            <person name="Taylor J."/>
            <person name="Schmutz J."/>
            <person name="Myers R.M."/>
            <person name="Cox D.R."/>
            <person name="Huang X."/>
            <person name="McPherson J.D."/>
            <person name="Mardis E.R."/>
            <person name="Clifton S.W."/>
            <person name="Warren W.C."/>
            <person name="Chinwalla A.T."/>
            <person name="Eddy S.R."/>
            <person name="Marra M.A."/>
            <person name="Ovcharenko I."/>
            <person name="Furey T.S."/>
            <person name="Miller W."/>
            <person name="Eichler E.E."/>
            <person name="Bork P."/>
            <person name="Suyama M."/>
            <person name="Torrents D."/>
            <person name="Waterston R.H."/>
            <person name="Wilson R.K."/>
        </authorList>
    </citation>
    <scope>NUCLEOTIDE SEQUENCE [LARGE SCALE GENOMIC DNA]</scope>
</reference>
<reference key="4">
    <citation type="submission" date="2005-07" db="EMBL/GenBank/DDBJ databases">
        <authorList>
            <person name="Mural R.J."/>
            <person name="Istrail S."/>
            <person name="Sutton G.G."/>
            <person name="Florea L."/>
            <person name="Halpern A.L."/>
            <person name="Mobarry C.M."/>
            <person name="Lippert R."/>
            <person name="Walenz B."/>
            <person name="Shatkay H."/>
            <person name="Dew I."/>
            <person name="Miller J.R."/>
            <person name="Flanigan M.J."/>
            <person name="Edwards N.J."/>
            <person name="Bolanos R."/>
            <person name="Fasulo D."/>
            <person name="Halldorsson B.V."/>
            <person name="Hannenhalli S."/>
            <person name="Turner R."/>
            <person name="Yooseph S."/>
            <person name="Lu F."/>
            <person name="Nusskern D.R."/>
            <person name="Shue B.C."/>
            <person name="Zheng X.H."/>
            <person name="Zhong F."/>
            <person name="Delcher A.L."/>
            <person name="Huson D.H."/>
            <person name="Kravitz S.A."/>
            <person name="Mouchard L."/>
            <person name="Reinert K."/>
            <person name="Remington K.A."/>
            <person name="Clark A.G."/>
            <person name="Waterman M.S."/>
            <person name="Eichler E.E."/>
            <person name="Adams M.D."/>
            <person name="Hunkapiller M.W."/>
            <person name="Myers E.W."/>
            <person name="Venter J.C."/>
        </authorList>
    </citation>
    <scope>NUCLEOTIDE SEQUENCE [LARGE SCALE GENOMIC DNA]</scope>
    <scope>VARIANT ILE-220</scope>
</reference>
<reference key="5">
    <citation type="journal article" date="2004" name="Genome Res.">
        <title>The status, quality, and expansion of the NIH full-length cDNA project: the Mammalian Gene Collection (MGC).</title>
        <authorList>
            <consortium name="The MGC Project Team"/>
        </authorList>
    </citation>
    <scope>NUCLEOTIDE SEQUENCE [LARGE SCALE MRNA] (ISOFORM 2)</scope>
    <scope>VARIANT ILE-220</scope>
    <source>
        <tissue>Brain</tissue>
    </source>
</reference>
<comment type="function">
    <text evidence="1">May be involved in spermatogenesis.</text>
</comment>
<comment type="interaction">
    <interactant intactId="EBI-25429087">
        <id>Q6V702</id>
    </interactant>
    <interactant intactId="EBI-2007911">
        <id>Q16236</id>
        <label>NFE2L2</label>
    </interactant>
    <organismsDiffer>false</organismsDiffer>
    <experiments>3</experiments>
</comment>
<comment type="subcellular location">
    <subcellularLocation>
        <location evidence="1">Cytoplasm</location>
    </subcellularLocation>
    <subcellularLocation>
        <location evidence="1">Nucleus</location>
    </subcellularLocation>
    <text evidence="1">Mainly cytoplasmic.</text>
</comment>
<comment type="alternative products">
    <event type="alternative splicing"/>
    <isoform>
        <id>Q6V702-2</id>
        <name>2</name>
        <sequence type="displayed"/>
    </isoform>
    <isoform>
        <id>Q6V702-1</id>
        <name>1</name>
        <sequence type="described" ref="VSP_037233"/>
    </isoform>
    <isoform>
        <id>Q6V702-3</id>
        <name>3</name>
        <sequence type="described" ref="VSP_037234 VSP_037235"/>
    </isoform>
</comment>
<comment type="miscellaneous">
    <molecule>Isoform 3</molecule>
    <text evidence="7">May be produced at very low levels due to a premature stop codon in the mRNA, leading to nonsense-mediated mRNA decay.</text>
</comment>
<name>CF299_HUMAN</name>
<accession>Q6V702</accession>
<accession>E7EQ13</accession>
<accession>Q6ZQY4</accession>
<accession>Q8N4G9</accession>
<organism>
    <name type="scientific">Homo sapiens</name>
    <name type="common">Human</name>
    <dbReference type="NCBI Taxonomy" id="9606"/>
    <lineage>
        <taxon>Eukaryota</taxon>
        <taxon>Metazoa</taxon>
        <taxon>Chordata</taxon>
        <taxon>Craniata</taxon>
        <taxon>Vertebrata</taxon>
        <taxon>Euteleostomi</taxon>
        <taxon>Mammalia</taxon>
        <taxon>Eutheria</taxon>
        <taxon>Euarchontoglires</taxon>
        <taxon>Primates</taxon>
        <taxon>Haplorrhini</taxon>
        <taxon>Catarrhini</taxon>
        <taxon>Hominidae</taxon>
        <taxon>Homo</taxon>
    </lineage>
</organism>
<keyword id="KW-0002">3D-structure</keyword>
<keyword id="KW-0025">Alternative splicing</keyword>
<keyword id="KW-0963">Cytoplasm</keyword>
<keyword id="KW-0539">Nucleus</keyword>
<keyword id="KW-1267">Proteomics identification</keyword>
<keyword id="KW-1185">Reference proteome</keyword>